<dbReference type="EC" id="1.4.3.21" evidence="5"/>
<dbReference type="EMBL" id="CU329670">
    <property type="protein sequence ID" value="CAB83008.1"/>
    <property type="molecule type" value="Genomic_DNA"/>
</dbReference>
<dbReference type="RefSeq" id="NP_593985.1">
    <property type="nucleotide sequence ID" value="NM_001019411.2"/>
</dbReference>
<dbReference type="SMR" id="Q9P7F2"/>
<dbReference type="BioGRID" id="278248">
    <property type="interactions" value="8"/>
</dbReference>
<dbReference type="FunCoup" id="Q9P7F2">
    <property type="interactions" value="63"/>
</dbReference>
<dbReference type="STRING" id="284812.Q9P7F2"/>
<dbReference type="iPTMnet" id="Q9P7F2"/>
<dbReference type="PaxDb" id="4896-SPAC2E1P3.04.1"/>
<dbReference type="EnsemblFungi" id="SPAC2E1P3.04.1">
    <property type="protein sequence ID" value="SPAC2E1P3.04.1:pep"/>
    <property type="gene ID" value="SPAC2E1P3.04"/>
</dbReference>
<dbReference type="GeneID" id="2541754"/>
<dbReference type="KEGG" id="spo:2541754"/>
<dbReference type="PomBase" id="SPAC2E1P3.04">
    <property type="gene designation" value="cao1"/>
</dbReference>
<dbReference type="VEuPathDB" id="FungiDB:SPAC2E1P3.04"/>
<dbReference type="eggNOG" id="KOG1186">
    <property type="taxonomic scope" value="Eukaryota"/>
</dbReference>
<dbReference type="HOGENOM" id="CLU_011500_3_2_1"/>
<dbReference type="InParanoid" id="Q9P7F2"/>
<dbReference type="OMA" id="VHVGFNY"/>
<dbReference type="PhylomeDB" id="Q9P7F2"/>
<dbReference type="PRO" id="PR:Q9P7F2"/>
<dbReference type="Proteomes" id="UP000002485">
    <property type="component" value="Chromosome I"/>
</dbReference>
<dbReference type="GO" id="GO:0042764">
    <property type="term" value="C:ascospore-type prospore"/>
    <property type="evidence" value="ECO:0000314"/>
    <property type="project" value="PomBase"/>
</dbReference>
<dbReference type="GO" id="GO:0005737">
    <property type="term" value="C:cytoplasm"/>
    <property type="evidence" value="ECO:0000314"/>
    <property type="project" value="PomBase"/>
</dbReference>
<dbReference type="GO" id="GO:0005829">
    <property type="term" value="C:cytosol"/>
    <property type="evidence" value="ECO:0007005"/>
    <property type="project" value="PomBase"/>
</dbReference>
<dbReference type="GO" id="GO:0005507">
    <property type="term" value="F:copper ion binding"/>
    <property type="evidence" value="ECO:0000318"/>
    <property type="project" value="GO_Central"/>
</dbReference>
<dbReference type="GO" id="GO:0008131">
    <property type="term" value="F:primary methylamine oxidase activity"/>
    <property type="evidence" value="ECO:0000314"/>
    <property type="project" value="PomBase"/>
</dbReference>
<dbReference type="GO" id="GO:0048038">
    <property type="term" value="F:quinone binding"/>
    <property type="evidence" value="ECO:0000255"/>
    <property type="project" value="PomBase"/>
</dbReference>
<dbReference type="GO" id="GO:0009310">
    <property type="term" value="P:amine catabolic process"/>
    <property type="evidence" value="ECO:0000314"/>
    <property type="project" value="PomBase"/>
</dbReference>
<dbReference type="GO" id="GO:0009308">
    <property type="term" value="P:amine metabolic process"/>
    <property type="evidence" value="ECO:0000318"/>
    <property type="project" value="GO_Central"/>
</dbReference>
<dbReference type="GO" id="GO:1990748">
    <property type="term" value="P:cellular detoxification"/>
    <property type="evidence" value="ECO:0000304"/>
    <property type="project" value="PomBase"/>
</dbReference>
<dbReference type="GO" id="GO:0006878">
    <property type="term" value="P:intracellular copper ion homeostasis"/>
    <property type="evidence" value="ECO:0000315"/>
    <property type="project" value="PomBase"/>
</dbReference>
<dbReference type="FunFam" id="2.70.98.20:FF:000001">
    <property type="entry name" value="Amine oxidase"/>
    <property type="match status" value="1"/>
</dbReference>
<dbReference type="FunFam" id="3.10.450.40:FF:000014">
    <property type="entry name" value="Peroxisomal primary amine oxidase"/>
    <property type="match status" value="1"/>
</dbReference>
<dbReference type="Gene3D" id="3.10.450.40">
    <property type="match status" value="2"/>
</dbReference>
<dbReference type="Gene3D" id="2.70.98.20">
    <property type="entry name" value="Copper amine oxidase, catalytic domain"/>
    <property type="match status" value="1"/>
</dbReference>
<dbReference type="InterPro" id="IPR049947">
    <property type="entry name" value="Cu_Am_Ox_Cu-bd"/>
</dbReference>
<dbReference type="InterPro" id="IPR049948">
    <property type="entry name" value="Cu_Am_ox_TPQ-bd"/>
</dbReference>
<dbReference type="InterPro" id="IPR000269">
    <property type="entry name" value="Cu_amine_oxidase"/>
</dbReference>
<dbReference type="InterPro" id="IPR015798">
    <property type="entry name" value="Cu_amine_oxidase_C"/>
</dbReference>
<dbReference type="InterPro" id="IPR036460">
    <property type="entry name" value="Cu_amine_oxidase_C_sf"/>
</dbReference>
<dbReference type="InterPro" id="IPR016182">
    <property type="entry name" value="Cu_amine_oxidase_N-reg"/>
</dbReference>
<dbReference type="InterPro" id="IPR015800">
    <property type="entry name" value="Cu_amine_oxidase_N2"/>
</dbReference>
<dbReference type="InterPro" id="IPR015802">
    <property type="entry name" value="Cu_amine_oxidase_N3"/>
</dbReference>
<dbReference type="NCBIfam" id="NF008559">
    <property type="entry name" value="PRK11504.1"/>
    <property type="match status" value="1"/>
</dbReference>
<dbReference type="PANTHER" id="PTHR10638">
    <property type="entry name" value="COPPER AMINE OXIDASE"/>
    <property type="match status" value="1"/>
</dbReference>
<dbReference type="PANTHER" id="PTHR10638:SF86">
    <property type="entry name" value="COPPER AMINE OXIDASE 1-RELATED"/>
    <property type="match status" value="1"/>
</dbReference>
<dbReference type="Pfam" id="PF01179">
    <property type="entry name" value="Cu_amine_oxid"/>
    <property type="match status" value="1"/>
</dbReference>
<dbReference type="Pfam" id="PF02727">
    <property type="entry name" value="Cu_amine_oxidN2"/>
    <property type="match status" value="1"/>
</dbReference>
<dbReference type="Pfam" id="PF02728">
    <property type="entry name" value="Cu_amine_oxidN3"/>
    <property type="match status" value="1"/>
</dbReference>
<dbReference type="SUPFAM" id="SSF49998">
    <property type="entry name" value="Amine oxidase catalytic domain"/>
    <property type="match status" value="1"/>
</dbReference>
<dbReference type="SUPFAM" id="SSF54416">
    <property type="entry name" value="Amine oxidase N-terminal region"/>
    <property type="match status" value="2"/>
</dbReference>
<dbReference type="PROSITE" id="PS01164">
    <property type="entry name" value="COPPER_AMINE_OXID_1"/>
    <property type="match status" value="1"/>
</dbReference>
<dbReference type="PROSITE" id="PS01165">
    <property type="entry name" value="COPPER_AMINE_OXID_2"/>
    <property type="match status" value="1"/>
</dbReference>
<comment type="function">
    <text evidence="6">Copper amine oxidase involved in the metabolism of xenobiotic and biogenic amines. Capable of catalyzing the oxidative deamination of primary amines such as ethylamine as alternate sources of nitrogen to support growth.</text>
</comment>
<comment type="catalytic activity">
    <reaction evidence="5">
        <text>a primary methyl amine + O2 + H2O = an aldehyde + H2O2 + NH4(+)</text>
        <dbReference type="Rhea" id="RHEA:16153"/>
        <dbReference type="ChEBI" id="CHEBI:15377"/>
        <dbReference type="ChEBI" id="CHEBI:15379"/>
        <dbReference type="ChEBI" id="CHEBI:16240"/>
        <dbReference type="ChEBI" id="CHEBI:17478"/>
        <dbReference type="ChEBI" id="CHEBI:28938"/>
        <dbReference type="ChEBI" id="CHEBI:228804"/>
        <dbReference type="EC" id="1.4.3.21"/>
    </reaction>
</comment>
<comment type="cofactor">
    <cofactor evidence="2">
        <name>Cu cation</name>
        <dbReference type="ChEBI" id="CHEBI:23378"/>
    </cofactor>
    <cofactor evidence="1">
        <name>Zn(2+)</name>
        <dbReference type="ChEBI" id="CHEBI:29105"/>
    </cofactor>
    <text evidence="1 2">Binds 1 copper ion per subunit (By similarity). Can also use zinc ion as cofactor (By similarity).</text>
</comment>
<comment type="cofactor">
    <cofactor evidence="2">
        <name>L-topaquinone</name>
        <dbReference type="ChEBI" id="CHEBI:79027"/>
    </cofactor>
    <text evidence="2">Contains 1 topaquinone per subunit.</text>
</comment>
<comment type="cofactor">
    <cofactor evidence="3">
        <name>Mn(2+)</name>
        <dbReference type="ChEBI" id="CHEBI:29035"/>
    </cofactor>
    <text evidence="3">Binds 1 Mn(2+) ion per subunit.</text>
</comment>
<comment type="subunit">
    <text evidence="2">Homodimer.</text>
</comment>
<comment type="subcellular location">
    <subcellularLocation>
        <location evidence="4 6">Cytoplasm</location>
    </subcellularLocation>
</comment>
<comment type="PTM">
    <text evidence="2">Topaquinone (TPQ) is generated by copper-dependent autoxidation of a specific tyrosyl residue.</text>
</comment>
<comment type="similarity">
    <text evidence="7">Belongs to the copper/topaquinone oxidase family.</text>
</comment>
<name>CAO1_SCHPO</name>
<proteinExistence type="evidence at protein level"/>
<gene>
    <name type="primary">cao1</name>
    <name type="synonym">spao1</name>
    <name type="ORF">SPAC2E1P3.04</name>
</gene>
<evidence type="ECO:0000250" key="1">
    <source>
        <dbReference type="UniProtKB" id="P12807"/>
    </source>
</evidence>
<evidence type="ECO:0000250" key="2">
    <source>
        <dbReference type="UniProtKB" id="P46883"/>
    </source>
</evidence>
<evidence type="ECO:0000250" key="3">
    <source>
        <dbReference type="UniProtKB" id="Q43077"/>
    </source>
</evidence>
<evidence type="ECO:0000269" key="4">
    <source>
    </source>
</evidence>
<evidence type="ECO:0000269" key="5">
    <source>
    </source>
</evidence>
<evidence type="ECO:0000269" key="6">
    <source>
    </source>
</evidence>
<evidence type="ECO:0000305" key="7"/>
<protein>
    <recommendedName>
        <fullName>Copper amine oxidase 1</fullName>
        <ecNumber evidence="5">1.4.3.21</ecNumber>
    </recommendedName>
</protein>
<reference key="1">
    <citation type="journal article" date="2002" name="Nature">
        <title>The genome sequence of Schizosaccharomyces pombe.</title>
        <authorList>
            <person name="Wood V."/>
            <person name="Gwilliam R."/>
            <person name="Rajandream M.A."/>
            <person name="Lyne M.H."/>
            <person name="Lyne R."/>
            <person name="Stewart A."/>
            <person name="Sgouros J.G."/>
            <person name="Peat N."/>
            <person name="Hayles J."/>
            <person name="Baker S.G."/>
            <person name="Basham D."/>
            <person name="Bowman S."/>
            <person name="Brooks K."/>
            <person name="Brown D."/>
            <person name="Brown S."/>
            <person name="Chillingworth T."/>
            <person name="Churcher C.M."/>
            <person name="Collins M."/>
            <person name="Connor R."/>
            <person name="Cronin A."/>
            <person name="Davis P."/>
            <person name="Feltwell T."/>
            <person name="Fraser A."/>
            <person name="Gentles S."/>
            <person name="Goble A."/>
            <person name="Hamlin N."/>
            <person name="Harris D.E."/>
            <person name="Hidalgo J."/>
            <person name="Hodgson G."/>
            <person name="Holroyd S."/>
            <person name="Hornsby T."/>
            <person name="Howarth S."/>
            <person name="Huckle E.J."/>
            <person name="Hunt S."/>
            <person name="Jagels K."/>
            <person name="James K.D."/>
            <person name="Jones L."/>
            <person name="Jones M."/>
            <person name="Leather S."/>
            <person name="McDonald S."/>
            <person name="McLean J."/>
            <person name="Mooney P."/>
            <person name="Moule S."/>
            <person name="Mungall K.L."/>
            <person name="Murphy L.D."/>
            <person name="Niblett D."/>
            <person name="Odell C."/>
            <person name="Oliver K."/>
            <person name="O'Neil S."/>
            <person name="Pearson D."/>
            <person name="Quail M.A."/>
            <person name="Rabbinowitsch E."/>
            <person name="Rutherford K.M."/>
            <person name="Rutter S."/>
            <person name="Saunders D."/>
            <person name="Seeger K."/>
            <person name="Sharp S."/>
            <person name="Skelton J."/>
            <person name="Simmonds M.N."/>
            <person name="Squares R."/>
            <person name="Squares S."/>
            <person name="Stevens K."/>
            <person name="Taylor K."/>
            <person name="Taylor R.G."/>
            <person name="Tivey A."/>
            <person name="Walsh S.V."/>
            <person name="Warren T."/>
            <person name="Whitehead S."/>
            <person name="Woodward J.R."/>
            <person name="Volckaert G."/>
            <person name="Aert R."/>
            <person name="Robben J."/>
            <person name="Grymonprez B."/>
            <person name="Weltjens I."/>
            <person name="Vanstreels E."/>
            <person name="Rieger M."/>
            <person name="Schaefer M."/>
            <person name="Mueller-Auer S."/>
            <person name="Gabel C."/>
            <person name="Fuchs M."/>
            <person name="Duesterhoeft A."/>
            <person name="Fritzc C."/>
            <person name="Holzer E."/>
            <person name="Moestl D."/>
            <person name="Hilbert H."/>
            <person name="Borzym K."/>
            <person name="Langer I."/>
            <person name="Beck A."/>
            <person name="Lehrach H."/>
            <person name="Reinhardt R."/>
            <person name="Pohl T.M."/>
            <person name="Eger P."/>
            <person name="Zimmermann W."/>
            <person name="Wedler H."/>
            <person name="Wambutt R."/>
            <person name="Purnelle B."/>
            <person name="Goffeau A."/>
            <person name="Cadieu E."/>
            <person name="Dreano S."/>
            <person name="Gloux S."/>
            <person name="Lelaure V."/>
            <person name="Mottier S."/>
            <person name="Galibert F."/>
            <person name="Aves S.J."/>
            <person name="Xiang Z."/>
            <person name="Hunt C."/>
            <person name="Moore K."/>
            <person name="Hurst S.M."/>
            <person name="Lucas M."/>
            <person name="Rochet M."/>
            <person name="Gaillardin C."/>
            <person name="Tallada V.A."/>
            <person name="Garzon A."/>
            <person name="Thode G."/>
            <person name="Daga R.R."/>
            <person name="Cruzado L."/>
            <person name="Jimenez J."/>
            <person name="Sanchez M."/>
            <person name="del Rey F."/>
            <person name="Benito J."/>
            <person name="Dominguez A."/>
            <person name="Revuelta J.L."/>
            <person name="Moreno S."/>
            <person name="Armstrong J."/>
            <person name="Forsburg S.L."/>
            <person name="Cerutti L."/>
            <person name="Lowe T."/>
            <person name="McCombie W.R."/>
            <person name="Paulsen I."/>
            <person name="Potashkin J."/>
            <person name="Shpakovski G.V."/>
            <person name="Ussery D."/>
            <person name="Barrell B.G."/>
            <person name="Nurse P."/>
        </authorList>
    </citation>
    <scope>NUCLEOTIDE SEQUENCE [LARGE SCALE GENOMIC DNA]</scope>
    <source>
        <strain>972 / ATCC 24843</strain>
    </source>
</reference>
<reference key="2">
    <citation type="journal article" date="2006" name="Microbiology">
        <title>Mechanisms of copper loading on the Schizosaccharomyces pombe copper amine oxidase 1 expressed in Saccharomyces cerevisiae.</title>
        <authorList>
            <person name="Laliberte J."/>
            <person name="Labbe S."/>
        </authorList>
    </citation>
    <scope>CATALYTIC ACTIVITY</scope>
</reference>
<reference key="3">
    <citation type="journal article" date="2006" name="Nat. Biotechnol.">
        <title>ORFeome cloning and global analysis of protein localization in the fission yeast Schizosaccharomyces pombe.</title>
        <authorList>
            <person name="Matsuyama A."/>
            <person name="Arai R."/>
            <person name="Yashiroda Y."/>
            <person name="Shirai A."/>
            <person name="Kamata A."/>
            <person name="Sekido S."/>
            <person name="Kobayashi Y."/>
            <person name="Hashimoto A."/>
            <person name="Hamamoto M."/>
            <person name="Hiraoka Y."/>
            <person name="Horinouchi S."/>
            <person name="Yoshida M."/>
        </authorList>
    </citation>
    <scope>SUBCELLULAR LOCATION [LARGE SCALE ANALYSIS]</scope>
</reference>
<reference key="4">
    <citation type="journal article" date="2008" name="Eukaryot. Cell">
        <title>Copper distributed by Atx1 is available to copper amine oxidase 1 in Schizosaccharomyces pombe.</title>
        <authorList>
            <person name="Peter C."/>
            <person name="Laliberte J."/>
            <person name="Beaudoin J."/>
            <person name="Labbe S."/>
        </authorList>
    </citation>
    <scope>SUBCELLULAR LOCATION</scope>
    <scope>FUNCTION</scope>
    <scope>MUTAGENESIS OF HIS-456; HIS-458; HIS-460 AND HIS-627</scope>
</reference>
<organism>
    <name type="scientific">Schizosaccharomyces pombe (strain 972 / ATCC 24843)</name>
    <name type="common">Fission yeast</name>
    <dbReference type="NCBI Taxonomy" id="284812"/>
    <lineage>
        <taxon>Eukaryota</taxon>
        <taxon>Fungi</taxon>
        <taxon>Dikarya</taxon>
        <taxon>Ascomycota</taxon>
        <taxon>Taphrinomycotina</taxon>
        <taxon>Schizosaccharomycetes</taxon>
        <taxon>Schizosaccharomycetales</taxon>
        <taxon>Schizosaccharomycetaceae</taxon>
        <taxon>Schizosaccharomyces</taxon>
    </lineage>
</organism>
<accession>Q9P7F2</accession>
<keyword id="KW-0186">Copper</keyword>
<keyword id="KW-0963">Cytoplasm</keyword>
<keyword id="KW-1015">Disulfide bond</keyword>
<keyword id="KW-0464">Manganese</keyword>
<keyword id="KW-0479">Metal-binding</keyword>
<keyword id="KW-0560">Oxidoreductase</keyword>
<keyword id="KW-1185">Reference proteome</keyword>
<keyword id="KW-0801">TPQ</keyword>
<sequence>MAYYPHLPYHHHHHTSVPGERLSDPLDPLSADELKLAVEIIRHEYPSKHFAFNVVTLEEPPKAKYLHWKYSKEDAHKPERIALAVLLEKGVPGILEARVNLTKAEVIQIEHITGVCPILTADMLVNTEQIVRKDPAVIEQCILSGVPPDQMDHVYCDPWTIGYDERYGNTRRMQQAMMYYRSNEDDSQYSHPLDFCPIIDTEDQKVVAIDIPPVRRPLSKHKHSNFNKKDIEAELGKMREVKPISVTQPEGVNFRMKGRYIEWQNFRMHIGFNYREGIVLSDISYNDNGHIRPLFYRMSIAEMVVPYGNPEHPHQRKHAFDLGEYGAGYLTNPLALGCDCKGVIHYLDAHFVNNTGEVETVKNAICIHEEDDGVLFKHSDFRDKFRTTISARGIRLVISQIFTAANYEYMVYWIFHMDGVIECELKLTGILNTYAMNEGEDLKGWGTQVYPQVNAHNHQHLFCLRLNPMLDGYSNSVAVVDGVSGPGEPGSKENYYGNAFTTERTVPKTVKEAICDYNSDTSRTWDICNPNKLHPYSGKPVSYKLVSRETPRLMARPGSLVSNRAGFARHHIHVTPYKDGQIYPAGDYVPQTSGEPTKGLPEWIAEEPDASVDNTDIVVWHTFGITHFPAPEDFPLMPAEPIRLLLRPRNFFLRNPALDVPPSKNVTTSEVKQAHHHGNLHMMDMMKSLTDATSEFAFGEKFCEKHKGDHFF</sequence>
<feature type="chain" id="PRO_0000316036" description="Copper amine oxidase 1">
    <location>
        <begin position="1"/>
        <end position="712"/>
    </location>
</feature>
<feature type="active site" description="Proton acceptor" evidence="1">
    <location>
        <position position="321"/>
    </location>
</feature>
<feature type="active site" description="Schiff-base intermediate with substrate; via topaquinone" evidence="1">
    <location>
        <position position="407"/>
    </location>
</feature>
<feature type="binding site" evidence="1">
    <location>
        <begin position="319"/>
        <end position="330"/>
    </location>
    <ligand>
        <name>substrate</name>
    </ligand>
</feature>
<feature type="binding site" evidence="2">
    <location>
        <begin position="404"/>
        <end position="409"/>
    </location>
    <ligand>
        <name>substrate</name>
    </ligand>
</feature>
<feature type="binding site" evidence="1">
    <location>
        <position position="458"/>
    </location>
    <ligand>
        <name>Cu cation</name>
        <dbReference type="ChEBI" id="CHEBI:23378"/>
    </ligand>
</feature>
<feature type="binding site" evidence="1">
    <location>
        <position position="460"/>
    </location>
    <ligand>
        <name>Cu cation</name>
        <dbReference type="ChEBI" id="CHEBI:23378"/>
    </ligand>
</feature>
<feature type="binding site" evidence="3">
    <location>
        <position position="616"/>
    </location>
    <ligand>
        <name>Mn(2+)</name>
        <dbReference type="ChEBI" id="CHEBI:29035"/>
    </ligand>
</feature>
<feature type="binding site" evidence="3">
    <location>
        <position position="617"/>
    </location>
    <ligand>
        <name>Mn(2+)</name>
        <dbReference type="ChEBI" id="CHEBI:29035"/>
    </ligand>
</feature>
<feature type="binding site" evidence="1">
    <location>
        <position position="627"/>
    </location>
    <ligand>
        <name>Cu cation</name>
        <dbReference type="ChEBI" id="CHEBI:23378"/>
    </ligand>
</feature>
<feature type="modified residue" description="2',4',5'-topaquinone" evidence="1">
    <location>
        <position position="407"/>
    </location>
</feature>
<feature type="disulfide bond" evidence="1">
    <location>
        <begin position="340"/>
        <end position="366"/>
    </location>
</feature>
<feature type="mutagenesis site" description="Decreases copper amine oxidase activity." evidence="6">
    <original>H</original>
    <variation>A</variation>
    <location>
        <position position="456"/>
    </location>
</feature>
<feature type="mutagenesis site" description="Impairs copper amine oxidase activity." evidence="6">
    <original>H</original>
    <variation>A</variation>
    <location>
        <position position="458"/>
    </location>
</feature>
<feature type="mutagenesis site" description="Impairs copper amine oxidase activity." evidence="6">
    <original>H</original>
    <variation>A</variation>
    <location>
        <position position="460"/>
    </location>
</feature>
<feature type="mutagenesis site" description="Impairs copper amine oxidase activity." evidence="6">
    <original>H</original>
    <variation>A</variation>
    <location>
        <position position="627"/>
    </location>
</feature>